<proteinExistence type="inferred from homology"/>
<name>OBG_CORU7</name>
<gene>
    <name evidence="1" type="primary">obg</name>
    <name type="ordered locus">cu1366</name>
</gene>
<evidence type="ECO:0000255" key="1">
    <source>
        <dbReference type="HAMAP-Rule" id="MF_01454"/>
    </source>
</evidence>
<evidence type="ECO:0000255" key="2">
    <source>
        <dbReference type="PROSITE-ProRule" id="PRU01229"/>
    </source>
</evidence>
<evidence type="ECO:0000255" key="3">
    <source>
        <dbReference type="PROSITE-ProRule" id="PRU01231"/>
    </source>
</evidence>
<evidence type="ECO:0000256" key="4">
    <source>
        <dbReference type="SAM" id="MobiDB-lite"/>
    </source>
</evidence>
<reference key="1">
    <citation type="journal article" date="2008" name="J. Biotechnol.">
        <title>The lifestyle of Corynebacterium urealyticum derived from its complete genome sequence established by pyrosequencing.</title>
        <authorList>
            <person name="Tauch A."/>
            <person name="Trost E."/>
            <person name="Tilker A."/>
            <person name="Ludewig U."/>
            <person name="Schneiker S."/>
            <person name="Goesmann A."/>
            <person name="Arnold W."/>
            <person name="Bekel T."/>
            <person name="Brinkrolf K."/>
            <person name="Brune I."/>
            <person name="Goetker S."/>
            <person name="Kalinowski J."/>
            <person name="Kamp P.-B."/>
            <person name="Lobo F.P."/>
            <person name="Viehoever P."/>
            <person name="Weisshaar B."/>
            <person name="Soriano F."/>
            <person name="Droege M."/>
            <person name="Puehler A."/>
        </authorList>
    </citation>
    <scope>NUCLEOTIDE SEQUENCE [LARGE SCALE GENOMIC DNA]</scope>
    <source>
        <strain>ATCC 43042 / DSM 7109</strain>
    </source>
</reference>
<keyword id="KW-0963">Cytoplasm</keyword>
<keyword id="KW-0342">GTP-binding</keyword>
<keyword id="KW-0378">Hydrolase</keyword>
<keyword id="KW-0460">Magnesium</keyword>
<keyword id="KW-0479">Metal-binding</keyword>
<keyword id="KW-0547">Nucleotide-binding</keyword>
<keyword id="KW-1185">Reference proteome</keyword>
<sequence length="504" mass="54610">MSQFVDRVVLHLKAGDGGNGCNSVRREKFMPLGGPDGGNGGHGGDIVLEVDPQVHTLLDFRFSPHVRAERGNNGAGDDRHGARGKDLTLHVPPGTVVIDEDGEVLADLVSPGQKVIVAQGGFGGLGNASLASKTRKAPGFALLGEPGEQKDVTLELKSMADVGLVGFPSAGKSSLISVLSAAKPKIADYPFTTLAPNLGVVSVDHDTFTIADVPGLIPGASEGRGLGLDFLRHIERTAVLAHVVDAAALESERNPLDDIRALEHELDSYQSELSADAGLGDLRERPRVIILNKMDVPDAEDMADLQEEELKKFGWPIFRISTVARTGLNELRFALMDIVREHRKKVENTPEPQQVIRPQSVGPKRKGRFADFEVHEDKQNPGAFIVTGQKIDRWILQTDFENDEAIGFLADRLAKAGVEEALWQAGAVDGSEVTIGGITFEWDPQTVAGVDQTPAYGRGKDRRLEQTDRVTAEQRKRASQARRGLIDEYDYGDGEVAHTERWQG</sequence>
<comment type="function">
    <text evidence="1">An essential GTPase which binds GTP, GDP and possibly (p)ppGpp with moderate affinity, with high nucleotide exchange rates and a fairly low GTP hydrolysis rate. Plays a role in control of the cell cycle, stress response, ribosome biogenesis and in those bacteria that undergo differentiation, in morphogenesis control.</text>
</comment>
<comment type="cofactor">
    <cofactor evidence="1">
        <name>Mg(2+)</name>
        <dbReference type="ChEBI" id="CHEBI:18420"/>
    </cofactor>
</comment>
<comment type="subunit">
    <text evidence="1">Monomer.</text>
</comment>
<comment type="subcellular location">
    <subcellularLocation>
        <location evidence="1">Cytoplasm</location>
    </subcellularLocation>
</comment>
<comment type="similarity">
    <text evidence="1">Belongs to the TRAFAC class OBG-HflX-like GTPase superfamily. OBG GTPase family.</text>
</comment>
<accession>B1VGL9</accession>
<organism>
    <name type="scientific">Corynebacterium urealyticum (strain ATCC 43042 / DSM 7109)</name>
    <dbReference type="NCBI Taxonomy" id="504474"/>
    <lineage>
        <taxon>Bacteria</taxon>
        <taxon>Bacillati</taxon>
        <taxon>Actinomycetota</taxon>
        <taxon>Actinomycetes</taxon>
        <taxon>Mycobacteriales</taxon>
        <taxon>Corynebacteriaceae</taxon>
        <taxon>Corynebacterium</taxon>
    </lineage>
</organism>
<protein>
    <recommendedName>
        <fullName evidence="1">GTPase Obg</fullName>
        <ecNumber evidence="1">3.6.5.-</ecNumber>
    </recommendedName>
    <alternativeName>
        <fullName evidence="1">GTP-binding protein Obg</fullName>
    </alternativeName>
</protein>
<dbReference type="EC" id="3.6.5.-" evidence="1"/>
<dbReference type="EMBL" id="AM942444">
    <property type="protein sequence ID" value="CAQ05326.1"/>
    <property type="molecule type" value="Genomic_DNA"/>
</dbReference>
<dbReference type="RefSeq" id="WP_012360614.1">
    <property type="nucleotide sequence ID" value="NC_010545.1"/>
</dbReference>
<dbReference type="SMR" id="B1VGL9"/>
<dbReference type="STRING" id="504474.cu1366"/>
<dbReference type="GeneID" id="60604146"/>
<dbReference type="KEGG" id="cur:cu1366"/>
<dbReference type="eggNOG" id="COG0536">
    <property type="taxonomic scope" value="Bacteria"/>
</dbReference>
<dbReference type="HOGENOM" id="CLU_011747_0_0_11"/>
<dbReference type="Proteomes" id="UP000001727">
    <property type="component" value="Chromosome"/>
</dbReference>
<dbReference type="GO" id="GO:0005737">
    <property type="term" value="C:cytoplasm"/>
    <property type="evidence" value="ECO:0007669"/>
    <property type="project" value="UniProtKB-SubCell"/>
</dbReference>
<dbReference type="GO" id="GO:0005525">
    <property type="term" value="F:GTP binding"/>
    <property type="evidence" value="ECO:0007669"/>
    <property type="project" value="UniProtKB-UniRule"/>
</dbReference>
<dbReference type="GO" id="GO:0003924">
    <property type="term" value="F:GTPase activity"/>
    <property type="evidence" value="ECO:0007669"/>
    <property type="project" value="UniProtKB-UniRule"/>
</dbReference>
<dbReference type="GO" id="GO:0000287">
    <property type="term" value="F:magnesium ion binding"/>
    <property type="evidence" value="ECO:0007669"/>
    <property type="project" value="InterPro"/>
</dbReference>
<dbReference type="GO" id="GO:0042254">
    <property type="term" value="P:ribosome biogenesis"/>
    <property type="evidence" value="ECO:0007669"/>
    <property type="project" value="UniProtKB-UniRule"/>
</dbReference>
<dbReference type="CDD" id="cd01898">
    <property type="entry name" value="Obg"/>
    <property type="match status" value="1"/>
</dbReference>
<dbReference type="FunFam" id="2.70.210.12:FF:000001">
    <property type="entry name" value="GTPase Obg"/>
    <property type="match status" value="1"/>
</dbReference>
<dbReference type="Gene3D" id="3.30.300.350">
    <property type="entry name" value="GTP-binding protein OBG, C-terminal domain"/>
    <property type="match status" value="1"/>
</dbReference>
<dbReference type="Gene3D" id="2.70.210.12">
    <property type="entry name" value="GTP1/OBG domain"/>
    <property type="match status" value="1"/>
</dbReference>
<dbReference type="Gene3D" id="3.40.50.300">
    <property type="entry name" value="P-loop containing nucleotide triphosphate hydrolases"/>
    <property type="match status" value="1"/>
</dbReference>
<dbReference type="HAMAP" id="MF_01454">
    <property type="entry name" value="GTPase_Obg"/>
    <property type="match status" value="1"/>
</dbReference>
<dbReference type="InterPro" id="IPR031167">
    <property type="entry name" value="G_OBG"/>
</dbReference>
<dbReference type="InterPro" id="IPR006073">
    <property type="entry name" value="GTP-bd"/>
</dbReference>
<dbReference type="InterPro" id="IPR014100">
    <property type="entry name" value="GTP-bd_Obg/CgtA"/>
</dbReference>
<dbReference type="InterPro" id="IPR036346">
    <property type="entry name" value="GTP-bd_prot_GTP1/OBG_C_sf"/>
</dbReference>
<dbReference type="InterPro" id="IPR006074">
    <property type="entry name" value="GTP1-OBG_CS"/>
</dbReference>
<dbReference type="InterPro" id="IPR006169">
    <property type="entry name" value="GTP1_OBG_dom"/>
</dbReference>
<dbReference type="InterPro" id="IPR036726">
    <property type="entry name" value="GTP1_OBG_dom_sf"/>
</dbReference>
<dbReference type="InterPro" id="IPR045086">
    <property type="entry name" value="OBG_GTPase"/>
</dbReference>
<dbReference type="InterPro" id="IPR015349">
    <property type="entry name" value="OCT_dom"/>
</dbReference>
<dbReference type="InterPro" id="IPR027417">
    <property type="entry name" value="P-loop_NTPase"/>
</dbReference>
<dbReference type="NCBIfam" id="TIGR02729">
    <property type="entry name" value="Obg_CgtA"/>
    <property type="match status" value="1"/>
</dbReference>
<dbReference type="NCBIfam" id="TIGR03595">
    <property type="entry name" value="Obg_CgtA_exten"/>
    <property type="match status" value="1"/>
</dbReference>
<dbReference type="NCBIfam" id="NF008954">
    <property type="entry name" value="PRK12296.1"/>
    <property type="match status" value="1"/>
</dbReference>
<dbReference type="NCBIfam" id="NF008955">
    <property type="entry name" value="PRK12297.1"/>
    <property type="match status" value="1"/>
</dbReference>
<dbReference type="NCBIfam" id="NF008956">
    <property type="entry name" value="PRK12299.1"/>
    <property type="match status" value="1"/>
</dbReference>
<dbReference type="PANTHER" id="PTHR11702">
    <property type="entry name" value="DEVELOPMENTALLY REGULATED GTP-BINDING PROTEIN-RELATED"/>
    <property type="match status" value="1"/>
</dbReference>
<dbReference type="PANTHER" id="PTHR11702:SF31">
    <property type="entry name" value="MITOCHONDRIAL RIBOSOME-ASSOCIATED GTPASE 2"/>
    <property type="match status" value="1"/>
</dbReference>
<dbReference type="Pfam" id="PF09269">
    <property type="entry name" value="DUF1967"/>
    <property type="match status" value="1"/>
</dbReference>
<dbReference type="Pfam" id="PF01018">
    <property type="entry name" value="GTP1_OBG"/>
    <property type="match status" value="1"/>
</dbReference>
<dbReference type="Pfam" id="PF01926">
    <property type="entry name" value="MMR_HSR1"/>
    <property type="match status" value="1"/>
</dbReference>
<dbReference type="PRINTS" id="PR00326">
    <property type="entry name" value="GTP1OBG"/>
</dbReference>
<dbReference type="SUPFAM" id="SSF102741">
    <property type="entry name" value="Obg GTP-binding protein C-terminal domain"/>
    <property type="match status" value="1"/>
</dbReference>
<dbReference type="SUPFAM" id="SSF82051">
    <property type="entry name" value="Obg GTP-binding protein N-terminal domain"/>
    <property type="match status" value="1"/>
</dbReference>
<dbReference type="SUPFAM" id="SSF52540">
    <property type="entry name" value="P-loop containing nucleoside triphosphate hydrolases"/>
    <property type="match status" value="1"/>
</dbReference>
<dbReference type="PROSITE" id="PS51710">
    <property type="entry name" value="G_OBG"/>
    <property type="match status" value="1"/>
</dbReference>
<dbReference type="PROSITE" id="PS00905">
    <property type="entry name" value="GTP1_OBG"/>
    <property type="match status" value="1"/>
</dbReference>
<dbReference type="PROSITE" id="PS51883">
    <property type="entry name" value="OBG"/>
    <property type="match status" value="1"/>
</dbReference>
<dbReference type="PROSITE" id="PS51881">
    <property type="entry name" value="OCT"/>
    <property type="match status" value="1"/>
</dbReference>
<feature type="chain" id="PRO_0000385862" description="GTPase Obg">
    <location>
        <begin position="1"/>
        <end position="504"/>
    </location>
</feature>
<feature type="domain" description="Obg" evidence="3">
    <location>
        <begin position="2"/>
        <end position="159"/>
    </location>
</feature>
<feature type="domain" description="OBG-type G" evidence="1">
    <location>
        <begin position="160"/>
        <end position="340"/>
    </location>
</feature>
<feature type="domain" description="OCT" evidence="2">
    <location>
        <begin position="364"/>
        <end position="444"/>
    </location>
</feature>
<feature type="region of interest" description="Disordered" evidence="4">
    <location>
        <begin position="68"/>
        <end position="88"/>
    </location>
</feature>
<feature type="region of interest" description="Disordered" evidence="4">
    <location>
        <begin position="449"/>
        <end position="481"/>
    </location>
</feature>
<feature type="compositionally biased region" description="Basic and acidic residues" evidence="4">
    <location>
        <begin position="458"/>
        <end position="476"/>
    </location>
</feature>
<feature type="binding site" evidence="1">
    <location>
        <begin position="166"/>
        <end position="173"/>
    </location>
    <ligand>
        <name>GTP</name>
        <dbReference type="ChEBI" id="CHEBI:37565"/>
    </ligand>
</feature>
<feature type="binding site" evidence="1">
    <location>
        <position position="173"/>
    </location>
    <ligand>
        <name>Mg(2+)</name>
        <dbReference type="ChEBI" id="CHEBI:18420"/>
    </ligand>
</feature>
<feature type="binding site" evidence="1">
    <location>
        <begin position="191"/>
        <end position="195"/>
    </location>
    <ligand>
        <name>GTP</name>
        <dbReference type="ChEBI" id="CHEBI:37565"/>
    </ligand>
</feature>
<feature type="binding site" evidence="1">
    <location>
        <position position="193"/>
    </location>
    <ligand>
        <name>Mg(2+)</name>
        <dbReference type="ChEBI" id="CHEBI:18420"/>
    </ligand>
</feature>
<feature type="binding site" evidence="1">
    <location>
        <begin position="212"/>
        <end position="215"/>
    </location>
    <ligand>
        <name>GTP</name>
        <dbReference type="ChEBI" id="CHEBI:37565"/>
    </ligand>
</feature>
<feature type="binding site" evidence="1">
    <location>
        <begin position="292"/>
        <end position="295"/>
    </location>
    <ligand>
        <name>GTP</name>
        <dbReference type="ChEBI" id="CHEBI:37565"/>
    </ligand>
</feature>
<feature type="binding site" evidence="1">
    <location>
        <begin position="321"/>
        <end position="323"/>
    </location>
    <ligand>
        <name>GTP</name>
        <dbReference type="ChEBI" id="CHEBI:37565"/>
    </ligand>
</feature>